<proteinExistence type="evidence at protein level"/>
<reference key="1">
    <citation type="journal article" date="1991" name="Mol. Microbiol.">
        <title>DNA sequence determination of the TOL plasmid (pWWO) xylGFJ genes of Pseudomonas putida: implications for the evolution of aromatic catabolism.</title>
        <authorList>
            <person name="Horn J.M."/>
            <person name="Harayama S."/>
            <person name="Timmis K.N."/>
        </authorList>
    </citation>
    <scope>NUCLEOTIDE SEQUENCE [GENOMIC DNA]</scope>
    <scope>PROTEIN SEQUENCE OF 1-23</scope>
</reference>
<reference key="2">
    <citation type="journal article" date="1991" name="J. Gen. Microbiol.">
        <title>Purification and some properties of the 2-hydroxy-6-oxohepta-2,4-dienoate hydrolase (2-hydroxymuconic semialdehyde hydrolase) encoded by the TOL plasmid pWW0 from Pseudomonas putida mt-2.</title>
        <authorList>
            <person name="Duggleby C.J."/>
            <person name="Williams P.A."/>
        </authorList>
    </citation>
    <scope>FUNCTION</scope>
    <scope>CATALYTIC ACTIVITY</scope>
    <scope>BIOPHYSICOCHEMICAL PROPERTIES</scope>
</reference>
<gene>
    <name type="primary">xylF</name>
</gene>
<dbReference type="EC" id="3.7.1.9"/>
<dbReference type="EMBL" id="M64747">
    <property type="protein sequence ID" value="AAA26054.1"/>
    <property type="molecule type" value="Genomic_DNA"/>
</dbReference>
<dbReference type="PIR" id="S18245">
    <property type="entry name" value="S18245"/>
</dbReference>
<dbReference type="RefSeq" id="NP_542864.1">
    <property type="nucleotide sequence ID" value="NC_003350.1"/>
</dbReference>
<dbReference type="RefSeq" id="WP_011005907.1">
    <property type="nucleotide sequence ID" value="NC_003350.1"/>
</dbReference>
<dbReference type="SMR" id="P23106"/>
<dbReference type="ESTHER" id="psepu-XYLF">
    <property type="family name" value="Carbon-carbon_bond_hydrolase"/>
</dbReference>
<dbReference type="BioCyc" id="MetaCyc:MONOMER-12763"/>
<dbReference type="SABIO-RK" id="P23106"/>
<dbReference type="UniPathway" id="UPA00156"/>
<dbReference type="GO" id="GO:0016020">
    <property type="term" value="C:membrane"/>
    <property type="evidence" value="ECO:0007669"/>
    <property type="project" value="TreeGrafter"/>
</dbReference>
<dbReference type="GO" id="GO:0018775">
    <property type="term" value="F:2-hydroxymuconate-semialdehyde hydrolase activity"/>
    <property type="evidence" value="ECO:0007669"/>
    <property type="project" value="UniProtKB-EC"/>
</dbReference>
<dbReference type="GO" id="GO:0052689">
    <property type="term" value="F:carboxylic ester hydrolase activity"/>
    <property type="evidence" value="ECO:0007669"/>
    <property type="project" value="UniProtKB-KW"/>
</dbReference>
<dbReference type="GO" id="GO:0043640">
    <property type="term" value="P:benzoate catabolic process via hydroxylation"/>
    <property type="evidence" value="ECO:0007669"/>
    <property type="project" value="UniProtKB-UniPathway"/>
</dbReference>
<dbReference type="Gene3D" id="3.40.50.1820">
    <property type="entry name" value="alpha/beta hydrolase"/>
    <property type="match status" value="1"/>
</dbReference>
<dbReference type="InterPro" id="IPR000073">
    <property type="entry name" value="AB_hydrolase_1"/>
</dbReference>
<dbReference type="InterPro" id="IPR029058">
    <property type="entry name" value="AB_hydrolase_fold"/>
</dbReference>
<dbReference type="InterPro" id="IPR050266">
    <property type="entry name" value="AB_hydrolase_sf"/>
</dbReference>
<dbReference type="PANTHER" id="PTHR43798:SF31">
    <property type="entry name" value="AB HYDROLASE SUPERFAMILY PROTEIN YCLE"/>
    <property type="match status" value="1"/>
</dbReference>
<dbReference type="PANTHER" id="PTHR43798">
    <property type="entry name" value="MONOACYLGLYCEROL LIPASE"/>
    <property type="match status" value="1"/>
</dbReference>
<dbReference type="Pfam" id="PF00561">
    <property type="entry name" value="Abhydrolase_1"/>
    <property type="match status" value="1"/>
</dbReference>
<dbReference type="PRINTS" id="PR00111">
    <property type="entry name" value="ABHYDROLASE"/>
</dbReference>
<dbReference type="SUPFAM" id="SSF53474">
    <property type="entry name" value="alpha/beta-Hydrolases"/>
    <property type="match status" value="1"/>
</dbReference>
<name>XYLF_PSEPU</name>
<geneLocation type="plasmid">
    <name>TOL pWW0</name>
</geneLocation>
<feature type="chain" id="PRO_0000207058" description="2-hydroxymuconate semialdehyde hydrolase">
    <location>
        <begin position="1"/>
        <end position="281"/>
    </location>
</feature>
<feature type="domain" description="AB hydrolase-1" evidence="2">
    <location>
        <begin position="31"/>
        <end position="261"/>
    </location>
</feature>
<feature type="region of interest" description="Disordered" evidence="3">
    <location>
        <begin position="30"/>
        <end position="55"/>
    </location>
</feature>
<feature type="active site" evidence="1">
    <location>
        <position position="106"/>
    </location>
</feature>
<feature type="active site" evidence="1">
    <location>
        <position position="227"/>
    </location>
</feature>
<feature type="active site" evidence="1">
    <location>
        <position position="255"/>
    </location>
</feature>
<comment type="function">
    <text evidence="4">Catalyzes the conversion of 2-hydroxymuconate semialdehyde to 2-hydroxypent-2,4-dienoate.</text>
</comment>
<comment type="catalytic activity">
    <reaction evidence="4">
        <text>(2Z,4E)-2-hydroxy-6-oxohexa-2,4-dienoate + H2O = 2-oxopent-4-enoate + formate + H(+)</text>
        <dbReference type="Rhea" id="RHEA:14549"/>
        <dbReference type="ChEBI" id="CHEBI:11641"/>
        <dbReference type="ChEBI" id="CHEBI:15377"/>
        <dbReference type="ChEBI" id="CHEBI:15378"/>
        <dbReference type="ChEBI" id="CHEBI:15740"/>
        <dbReference type="ChEBI" id="CHEBI:71198"/>
        <dbReference type="EC" id="3.7.1.9"/>
    </reaction>
</comment>
<comment type="biophysicochemical properties">
    <kinetics>
        <KM evidence="4">30 uM for catechol</KM>
        <KM evidence="4">36 uM for 3-methylcatechol</KM>
        <KM evidence="4">10 uM for 4-methylcatechol</KM>
        <KM evidence="4">15 uM for 3-ethylcatechol</KM>
        <KM evidence="4">22 uM for 4-ethylcatechol</KM>
        <KM evidence="4">5 uM for 3-propylcatechol</KM>
        <KM evidence="4">23 uM for 4-propylcatechol</KM>
        <KM evidence="4">37 uM for 3-allylcatechol</KM>
    </kinetics>
    <phDependence>
        <text evidence="4">Optimum pH is 7-7.5.</text>
    </phDependence>
</comment>
<comment type="pathway">
    <text>Aromatic compound metabolism; benzoate degradation via hydroxylation.</text>
</comment>
<comment type="similarity">
    <text evidence="5">Belongs to the DmpD/TodF/XylF esterase family.</text>
</comment>
<protein>
    <recommendedName>
        <fullName>2-hydroxymuconate semialdehyde hydrolase</fullName>
        <shortName>HMSH</shortName>
        <ecNumber>3.7.1.9</ecNumber>
    </recommendedName>
    <alternativeName>
        <fullName>2-hydroxymuconic semialdehyde hydrolase</fullName>
    </alternativeName>
</protein>
<keyword id="KW-0058">Aromatic hydrocarbons catabolism</keyword>
<keyword id="KW-0903">Direct protein sequencing</keyword>
<keyword id="KW-0378">Hydrolase</keyword>
<keyword id="KW-0614">Plasmid</keyword>
<keyword id="KW-0719">Serine esterase</keyword>
<evidence type="ECO:0000250" key="1"/>
<evidence type="ECO:0000255" key="2"/>
<evidence type="ECO:0000256" key="3">
    <source>
        <dbReference type="SAM" id="MobiDB-lite"/>
    </source>
</evidence>
<evidence type="ECO:0000269" key="4">
    <source ref="2"/>
</evidence>
<evidence type="ECO:0000305" key="5"/>
<sequence>MNAPQQSPEIGREILAAGYRTNLHDQGEGFPALLIHGSGPASPPGPTGAGSFRSSQTRRVIAPDMLGFGYSERPADGKYSQARWVEHAIGVLDALGIQQGDIVGNSFGGGLALALAIRHPERVRRLVLMGSVGVSFPITAGLETAWGYTPSLANMRRLLDLFAHDRTLVNDELAELRYQASIRPGFQESFAAMFPPPRQNGVDDLASNETDIRALPNETLVIHGREDRIIPLQASLTLAQWIPNAQLHVFGQCGHWTQIEHAERFARLVENFLAEADALHS</sequence>
<accession>P23106</accession>
<organism>
    <name type="scientific">Pseudomonas putida</name>
    <name type="common">Arthrobacter siderocapsulatus</name>
    <dbReference type="NCBI Taxonomy" id="303"/>
    <lineage>
        <taxon>Bacteria</taxon>
        <taxon>Pseudomonadati</taxon>
        <taxon>Pseudomonadota</taxon>
        <taxon>Gammaproteobacteria</taxon>
        <taxon>Pseudomonadales</taxon>
        <taxon>Pseudomonadaceae</taxon>
        <taxon>Pseudomonas</taxon>
    </lineage>
</organism>